<evidence type="ECO:0000250" key="1"/>
<evidence type="ECO:0000305" key="2"/>
<gene>
    <name type="primary">mak</name>
    <name type="ordered locus">MAV_5185</name>
</gene>
<dbReference type="EC" id="2.7.1.175"/>
<dbReference type="EMBL" id="CP000479">
    <property type="protein sequence ID" value="ABK69468.1"/>
    <property type="molecule type" value="Genomic_DNA"/>
</dbReference>
<dbReference type="RefSeq" id="WP_011726512.1">
    <property type="nucleotide sequence ID" value="NC_008595.1"/>
</dbReference>
<dbReference type="SMR" id="A0QN14"/>
<dbReference type="KEGG" id="mav:MAV_5185"/>
<dbReference type="HOGENOM" id="CLU_029675_0_0_11"/>
<dbReference type="UniPathway" id="UPA00164"/>
<dbReference type="Proteomes" id="UP000001574">
    <property type="component" value="Chromosome"/>
</dbReference>
<dbReference type="GO" id="GO:0005524">
    <property type="term" value="F:ATP binding"/>
    <property type="evidence" value="ECO:0007669"/>
    <property type="project" value="UniProtKB-KW"/>
</dbReference>
<dbReference type="GO" id="GO:0016301">
    <property type="term" value="F:kinase activity"/>
    <property type="evidence" value="ECO:0007669"/>
    <property type="project" value="UniProtKB-KW"/>
</dbReference>
<dbReference type="GO" id="GO:0046835">
    <property type="term" value="P:carbohydrate phosphorylation"/>
    <property type="evidence" value="ECO:0000250"/>
    <property type="project" value="UniProtKB"/>
</dbReference>
<dbReference type="GO" id="GO:0005978">
    <property type="term" value="P:glycogen biosynthetic process"/>
    <property type="evidence" value="ECO:0007669"/>
    <property type="project" value="UniProtKB-UniPathway"/>
</dbReference>
<dbReference type="GO" id="GO:0005992">
    <property type="term" value="P:trehalose biosynthetic process"/>
    <property type="evidence" value="ECO:0000250"/>
    <property type="project" value="UniProtKB"/>
</dbReference>
<dbReference type="FunFam" id="3.90.1200.10:FF:000010">
    <property type="entry name" value="Maltokinase"/>
    <property type="match status" value="1"/>
</dbReference>
<dbReference type="Gene3D" id="3.90.1200.10">
    <property type="match status" value="1"/>
</dbReference>
<dbReference type="InterPro" id="IPR011009">
    <property type="entry name" value="Kinase-like_dom_sf"/>
</dbReference>
<dbReference type="InterPro" id="IPR040999">
    <property type="entry name" value="Mak_N_cap"/>
</dbReference>
<dbReference type="Pfam" id="PF18085">
    <property type="entry name" value="Mak_N_cap"/>
    <property type="match status" value="1"/>
</dbReference>
<dbReference type="SUPFAM" id="SSF56112">
    <property type="entry name" value="Protein kinase-like (PK-like)"/>
    <property type="match status" value="1"/>
</dbReference>
<name>MAK_MYCA1</name>
<organism>
    <name type="scientific">Mycobacterium avium (strain 104)</name>
    <dbReference type="NCBI Taxonomy" id="243243"/>
    <lineage>
        <taxon>Bacteria</taxon>
        <taxon>Bacillati</taxon>
        <taxon>Actinomycetota</taxon>
        <taxon>Actinomycetes</taxon>
        <taxon>Mycobacteriales</taxon>
        <taxon>Mycobacteriaceae</taxon>
        <taxon>Mycobacterium</taxon>
        <taxon>Mycobacterium avium complex (MAC)</taxon>
    </lineage>
</organism>
<feature type="chain" id="PRO_0000412882" description="Maltokinase">
    <location>
        <begin position="1"/>
        <end position="452"/>
    </location>
</feature>
<keyword id="KW-0067">ATP-binding</keyword>
<keyword id="KW-0119">Carbohydrate metabolism</keyword>
<keyword id="KW-0320">Glycogen biosynthesis</keyword>
<keyword id="KW-0321">Glycogen metabolism</keyword>
<keyword id="KW-0418">Kinase</keyword>
<keyword id="KW-0547">Nucleotide-binding</keyword>
<keyword id="KW-0808">Transferase</keyword>
<accession>A0QN14</accession>
<proteinExistence type="inferred from homology"/>
<reference key="1">
    <citation type="submission" date="2006-10" db="EMBL/GenBank/DDBJ databases">
        <authorList>
            <person name="Fleischmann R.D."/>
            <person name="Dodson R.J."/>
            <person name="Haft D.H."/>
            <person name="Merkel J.S."/>
            <person name="Nelson W.C."/>
            <person name="Fraser C.M."/>
        </authorList>
    </citation>
    <scope>NUCLEOTIDE SEQUENCE [LARGE SCALE GENOMIC DNA]</scope>
    <source>
        <strain>104</strain>
    </source>
</reference>
<protein>
    <recommendedName>
        <fullName>Maltokinase</fullName>
        <shortName>MaK</shortName>
        <ecNumber>2.7.1.175</ecNumber>
    </recommendedName>
    <alternativeName>
        <fullName>Maltose-1-phosphate synthase</fullName>
    </alternativeName>
</protein>
<sequence length="452" mass="49143">MTEPAKLPWSDWLPQQRWYAGRNRRLTGAEPSVIVGLRDDLDLVLVDADYADGSRDRYQVLVCWDAAPVSEYSTVATIGAADDRTGFDALYDDEAPQFLLSLIDSSAVRSASGAEVRFAKEPDAQLPLEAMAHVSDAEQSNTSVIFDRDAIFKVFRRVSSGINPDIELNRVLGRAGNPHVARLLGTYEMAGADGTPETAWPLGMVTEFAANAAEGWAMATASVRDLFAEGDLYAHEVGGDFAGESYRLGEAVASVHATLAETLGTSQAAFPVDNVLARLSSTAALVPELTEYAATIEERFAKLATETITVQRVHGDLHLGQVLRTPESWLLIDFEGEPGQPLEERRAPDSPLRDVAGVLRSFEYAAYGPLVEQGSQNTDKQLAARAREWVERNRTAFCDGYAAASGIDPRDSAPLLAAYELDKAVYEAGYEARHRPGWLPIPLRSIARLTAA</sequence>
<comment type="function">
    <text evidence="1">Catalyzes the ATP-dependent phosphorylation of maltose to maltose 1-phosphate. Is involved in a branched alpha-glucan biosynthetic pathway from trehalose, together with TreS, GlgE and GlgB (By similarity).</text>
</comment>
<comment type="catalytic activity">
    <reaction>
        <text>D-maltose + ATP = alpha-maltose 1-phosphate + ADP + H(+)</text>
        <dbReference type="Rhea" id="RHEA:31915"/>
        <dbReference type="ChEBI" id="CHEBI:15378"/>
        <dbReference type="ChEBI" id="CHEBI:17306"/>
        <dbReference type="ChEBI" id="CHEBI:30616"/>
        <dbReference type="ChEBI" id="CHEBI:63576"/>
        <dbReference type="ChEBI" id="CHEBI:456216"/>
        <dbReference type="EC" id="2.7.1.175"/>
    </reaction>
</comment>
<comment type="pathway">
    <text>Glycan biosynthesis; glycogen biosynthesis.</text>
</comment>
<comment type="subunit">
    <text evidence="1">Monomer.</text>
</comment>
<comment type="similarity">
    <text evidence="2">Belongs to the aminoglycoside phosphotransferase family.</text>
</comment>